<accession>Q1W0Y2</accession>
<accession>A1XQT3</accession>
<accession>Q9TRE9</accession>
<keyword id="KW-0002">3D-structure</keyword>
<keyword id="KW-0007">Acetylation</keyword>
<keyword id="KW-0903">Direct protein sequencing</keyword>
<keyword id="KW-0472">Membrane</keyword>
<keyword id="KW-0496">Mitochondrion</keyword>
<keyword id="KW-0999">Mitochondrion inner membrane</keyword>
<keyword id="KW-1185">Reference proteome</keyword>
<keyword id="KW-0809">Transit peptide</keyword>
<keyword id="KW-0812">Transmembrane</keyword>
<keyword id="KW-1133">Transmembrane helix</keyword>
<dbReference type="EMBL" id="DQ456972">
    <property type="protein sequence ID" value="ABD98458.1"/>
    <property type="molecule type" value="mRNA"/>
</dbReference>
<dbReference type="EMBL" id="DQ456973">
    <property type="protein sequence ID" value="ABD98459.1"/>
    <property type="molecule type" value="mRNA"/>
</dbReference>
<dbReference type="EMBL" id="DQ629155">
    <property type="protein sequence ID" value="ABK55639.1"/>
    <property type="molecule type" value="mRNA"/>
</dbReference>
<dbReference type="PIR" id="PN0607">
    <property type="entry name" value="PN0607"/>
</dbReference>
<dbReference type="RefSeq" id="NP_001090943.1">
    <property type="nucleotide sequence ID" value="NM_001097474.1"/>
</dbReference>
<dbReference type="RefSeq" id="XP_013850421.1">
    <property type="nucleotide sequence ID" value="XM_013994967.2"/>
</dbReference>
<dbReference type="PDB" id="8UGH">
    <property type="method" value="EM"/>
    <property type="resolution" value="2.10 A"/>
    <property type="chains" value="4L=1-63"/>
</dbReference>
<dbReference type="PDB" id="8UGI">
    <property type="method" value="EM"/>
    <property type="resolution" value="2.10 A"/>
    <property type="chains" value="4L=1-63"/>
</dbReference>
<dbReference type="PDB" id="8UGJ">
    <property type="method" value="EM"/>
    <property type="resolution" value="2.30 A"/>
    <property type="chains" value="4L/8L=1-63"/>
</dbReference>
<dbReference type="PDB" id="8UGL">
    <property type="method" value="EM"/>
    <property type="resolution" value="3.00 A"/>
    <property type="chains" value="4L=1-63"/>
</dbReference>
<dbReference type="PDB" id="8UGN">
    <property type="method" value="EM"/>
    <property type="resolution" value="2.70 A"/>
    <property type="chains" value="4L/8L=1-63"/>
</dbReference>
<dbReference type="PDB" id="8UGR">
    <property type="method" value="EM"/>
    <property type="resolution" value="6.50 A"/>
    <property type="chains" value="4L/8L=1-63"/>
</dbReference>
<dbReference type="PDBsum" id="8UGH"/>
<dbReference type="PDBsum" id="8UGI"/>
<dbReference type="PDBsum" id="8UGJ"/>
<dbReference type="PDBsum" id="8UGL"/>
<dbReference type="PDBsum" id="8UGN"/>
<dbReference type="PDBsum" id="8UGR"/>
<dbReference type="EMDB" id="EMD-42225"/>
<dbReference type="EMDB" id="EMD-42226"/>
<dbReference type="EMDB" id="EMD-42227"/>
<dbReference type="EMDB" id="EMD-42229"/>
<dbReference type="EMDB" id="EMD-42230"/>
<dbReference type="EMDB" id="EMD-42233"/>
<dbReference type="SMR" id="Q1W0Y2"/>
<dbReference type="FunCoup" id="Q1W0Y2">
    <property type="interactions" value="1760"/>
</dbReference>
<dbReference type="STRING" id="9823.ENSSSCP00000048132"/>
<dbReference type="PaxDb" id="9823-ENSSSCP00000015039"/>
<dbReference type="PeptideAtlas" id="Q1W0Y2"/>
<dbReference type="Ensembl" id="ENSSSCT00000063285.3">
    <property type="protein sequence ID" value="ENSSSCP00000048132.1"/>
    <property type="gene ID" value="ENSSSCG00000040325.3"/>
</dbReference>
<dbReference type="Ensembl" id="ENSSSCT00015008457.1">
    <property type="protein sequence ID" value="ENSSSCP00015003413.1"/>
    <property type="gene ID" value="ENSSSCG00015006366.1"/>
</dbReference>
<dbReference type="Ensembl" id="ENSSSCT00025003198.1">
    <property type="protein sequence ID" value="ENSSSCP00025001178.1"/>
    <property type="gene ID" value="ENSSSCG00025002477.1"/>
</dbReference>
<dbReference type="Ensembl" id="ENSSSCT00030066375.1">
    <property type="protein sequence ID" value="ENSSSCP00030030404.1"/>
    <property type="gene ID" value="ENSSSCG00030047549.1"/>
</dbReference>
<dbReference type="Ensembl" id="ENSSSCT00035107019.1">
    <property type="protein sequence ID" value="ENSSSCP00035046174.1"/>
    <property type="gene ID" value="ENSSSCG00035078393.1"/>
</dbReference>
<dbReference type="Ensembl" id="ENSSSCT00045055691.1">
    <property type="protein sequence ID" value="ENSSSCP00045038841.1"/>
    <property type="gene ID" value="ENSSSCG00045032627.1"/>
</dbReference>
<dbReference type="Ensembl" id="ENSSSCT00050050884.1">
    <property type="protein sequence ID" value="ENSSSCP00050021309.1"/>
    <property type="gene ID" value="ENSSSCG00050037765.1"/>
</dbReference>
<dbReference type="Ensembl" id="ENSSSCT00055055695.1">
    <property type="protein sequence ID" value="ENSSSCP00055044451.1"/>
    <property type="gene ID" value="ENSSSCG00055028128.1"/>
</dbReference>
<dbReference type="Ensembl" id="ENSSSCT00060086125.1">
    <property type="protein sequence ID" value="ENSSSCP00060037241.1"/>
    <property type="gene ID" value="ENSSSCG00060063156.1"/>
</dbReference>
<dbReference type="Ensembl" id="ENSSSCT00065021399.1">
    <property type="protein sequence ID" value="ENSSSCP00065008666.1"/>
    <property type="gene ID" value="ENSSSCG00065016135.1"/>
</dbReference>
<dbReference type="Ensembl" id="ENSSSCT00070014666.1">
    <property type="protein sequence ID" value="ENSSSCP00070012117.1"/>
    <property type="gene ID" value="ENSSSCG00070007583.1"/>
</dbReference>
<dbReference type="Ensembl" id="ENSSSCT00070014677.1">
    <property type="protein sequence ID" value="ENSSSCP00070012127.1"/>
    <property type="gene ID" value="ENSSSCG00070007583.1"/>
</dbReference>
<dbReference type="Ensembl" id="ENSSSCT00085016773">
    <property type="protein sequence ID" value="ENSSSCP00085011877"/>
    <property type="gene ID" value="ENSSSCG00085008904"/>
</dbReference>
<dbReference type="Ensembl" id="ENSSSCT00090047291">
    <property type="protein sequence ID" value="ENSSSCP00090029368"/>
    <property type="gene ID" value="ENSSSCG00090026742"/>
</dbReference>
<dbReference type="Ensembl" id="ENSSSCT00105065198">
    <property type="protein sequence ID" value="ENSSSCP00105046474"/>
    <property type="gene ID" value="ENSSSCG00105034155"/>
</dbReference>
<dbReference type="Ensembl" id="ENSSSCT00110000906">
    <property type="protein sequence ID" value="ENSSSCP00110000709"/>
    <property type="gene ID" value="ENSSSCG00110000472"/>
</dbReference>
<dbReference type="Ensembl" id="ENSSSCT00115021527">
    <property type="protein sequence ID" value="ENSSSCP00115020384"/>
    <property type="gene ID" value="ENSSSCG00115012474"/>
</dbReference>
<dbReference type="Ensembl" id="ENSSSCT00130024280">
    <property type="protein sequence ID" value="ENSSSCP00130016744"/>
    <property type="gene ID" value="ENSSSCG00130012419"/>
</dbReference>
<dbReference type="GeneID" id="100037990"/>
<dbReference type="KEGG" id="ssc:100037990"/>
<dbReference type="CTD" id="1350"/>
<dbReference type="VGNC" id="VGNC:99628">
    <property type="gene designation" value="COX7C"/>
</dbReference>
<dbReference type="eggNOG" id="KOG4527">
    <property type="taxonomic scope" value="Eukaryota"/>
</dbReference>
<dbReference type="GeneTree" id="ENSGT00390000018086"/>
<dbReference type="HOGENOM" id="CLU_194769_0_0_1"/>
<dbReference type="InParanoid" id="Q1W0Y2"/>
<dbReference type="OMA" id="SIENKWR"/>
<dbReference type="OrthoDB" id="9974841at2759"/>
<dbReference type="TreeFam" id="TF105069"/>
<dbReference type="Reactome" id="R-SSC-5628897">
    <property type="pathway name" value="TP53 Regulates Metabolic Genes"/>
</dbReference>
<dbReference type="Reactome" id="R-SSC-611105">
    <property type="pathway name" value="Respiratory electron transport"/>
</dbReference>
<dbReference type="Reactome" id="R-SSC-9707564">
    <property type="pathway name" value="Cytoprotection by HMOX1"/>
</dbReference>
<dbReference type="Reactome" id="R-SSC-9864848">
    <property type="pathway name" value="Complex IV assembly"/>
</dbReference>
<dbReference type="UniPathway" id="UPA00705"/>
<dbReference type="Proteomes" id="UP000008227">
    <property type="component" value="Chromosome 2"/>
</dbReference>
<dbReference type="Proteomes" id="UP000314985">
    <property type="component" value="Chromosome 2"/>
</dbReference>
<dbReference type="Proteomes" id="UP000694570">
    <property type="component" value="Unplaced"/>
</dbReference>
<dbReference type="Proteomes" id="UP000694571">
    <property type="component" value="Unplaced"/>
</dbReference>
<dbReference type="Proteomes" id="UP000694720">
    <property type="component" value="Unplaced"/>
</dbReference>
<dbReference type="Proteomes" id="UP000694722">
    <property type="component" value="Unplaced"/>
</dbReference>
<dbReference type="Proteomes" id="UP000694723">
    <property type="component" value="Unplaced"/>
</dbReference>
<dbReference type="Proteomes" id="UP000694724">
    <property type="component" value="Unplaced"/>
</dbReference>
<dbReference type="Proteomes" id="UP000694725">
    <property type="component" value="Unplaced"/>
</dbReference>
<dbReference type="Proteomes" id="UP000694726">
    <property type="component" value="Unplaced"/>
</dbReference>
<dbReference type="Proteomes" id="UP000694727">
    <property type="component" value="Unplaced"/>
</dbReference>
<dbReference type="Proteomes" id="UP000694728">
    <property type="component" value="Unplaced"/>
</dbReference>
<dbReference type="Bgee" id="ENSSSCG00000040325">
    <property type="expression patterns" value="Expressed in heart left ventricle and 46 other cell types or tissues"/>
</dbReference>
<dbReference type="GO" id="GO:0005743">
    <property type="term" value="C:mitochondrial inner membrane"/>
    <property type="evidence" value="ECO:0007669"/>
    <property type="project" value="UniProtKB-SubCell"/>
</dbReference>
<dbReference type="GO" id="GO:0045277">
    <property type="term" value="C:respiratory chain complex IV"/>
    <property type="evidence" value="ECO:0007669"/>
    <property type="project" value="Ensembl"/>
</dbReference>
<dbReference type="GO" id="GO:0006123">
    <property type="term" value="P:mitochondrial electron transport, cytochrome c to oxygen"/>
    <property type="evidence" value="ECO:0000318"/>
    <property type="project" value="GO_Central"/>
</dbReference>
<dbReference type="CDD" id="cd00929">
    <property type="entry name" value="Cyt_c_Oxidase_VIIc"/>
    <property type="match status" value="1"/>
</dbReference>
<dbReference type="FunFam" id="4.10.49.10:FF:000001">
    <property type="entry name" value="Cytochrome c oxidase subunit 7C"/>
    <property type="match status" value="1"/>
</dbReference>
<dbReference type="Gene3D" id="4.10.49.10">
    <property type="entry name" value="Cytochrome c oxidase subunit VIIc"/>
    <property type="match status" value="1"/>
</dbReference>
<dbReference type="InterPro" id="IPR004202">
    <property type="entry name" value="COX7C/Cox8"/>
</dbReference>
<dbReference type="InterPro" id="IPR036636">
    <property type="entry name" value="COX7C/Cox8_sf"/>
</dbReference>
<dbReference type="PANTHER" id="PTHR13313:SF0">
    <property type="entry name" value="CYTOCHROME C OXIDASE SUBUNIT 7C, MITOCHONDRIAL"/>
    <property type="match status" value="1"/>
</dbReference>
<dbReference type="PANTHER" id="PTHR13313">
    <property type="entry name" value="CYTOCHROME C OXIDASE SUBUNIT VIIC"/>
    <property type="match status" value="1"/>
</dbReference>
<dbReference type="Pfam" id="PF02935">
    <property type="entry name" value="COX7C"/>
    <property type="match status" value="1"/>
</dbReference>
<dbReference type="SUPFAM" id="SSF81427">
    <property type="entry name" value="Mitochondrial cytochrome c oxidase subunit VIIc (aka VIIIa)"/>
    <property type="match status" value="1"/>
</dbReference>
<sequence>MLGQSIRRFTTSVVRRSHYEEGPGKNLPFSVENKWRLLAMMTLYFGSGFAAPFFIVRHQLLKK</sequence>
<feature type="transit peptide" description="Mitochondrion" evidence="5">
    <location>
        <begin position="1"/>
        <end position="16"/>
    </location>
</feature>
<feature type="chain" id="PRO_0000245342" description="Cytochrome c oxidase subunit 7C, mitochondrial">
    <location>
        <begin position="17"/>
        <end position="63"/>
    </location>
</feature>
<feature type="topological domain" description="Mitochondrial matrix" evidence="1">
    <location>
        <begin position="17"/>
        <end position="33"/>
    </location>
</feature>
<feature type="transmembrane region" description="Helical" evidence="1">
    <location>
        <begin position="34"/>
        <end position="60"/>
    </location>
</feature>
<feature type="topological domain" description="Mitochondrial intermembrane" evidence="1">
    <location>
        <begin position="61"/>
        <end position="63"/>
    </location>
</feature>
<feature type="modified residue" description="N6-acetyllysine; alternate" evidence="4">
    <location>
        <position position="25"/>
    </location>
</feature>
<feature type="modified residue" description="N6-succinyllysine; alternate" evidence="4">
    <location>
        <position position="25"/>
    </location>
</feature>
<protein>
    <recommendedName>
        <fullName>Cytochrome c oxidase subunit 7C, mitochondrial</fullName>
    </recommendedName>
    <alternativeName>
        <fullName>Cytochrome c oxidase polypeptide VIIc</fullName>
    </alternativeName>
</protein>
<name>COX7C_PIG</name>
<gene>
    <name type="primary">COX7C</name>
    <name type="synonym">COX7C1</name>
</gene>
<proteinExistence type="evidence at protein level"/>
<reference key="1">
    <citation type="submission" date="2006-03" db="EMBL/GenBank/DDBJ databases">
        <title>Cloning and sequencing the full-length cDNA of pig COX7C gene.</title>
        <authorList>
            <person name="Huang T."/>
            <person name="Xiong Y.-Z."/>
        </authorList>
    </citation>
    <scope>NUCLEOTIDE SEQUENCE [MRNA]</scope>
</reference>
<reference key="2">
    <citation type="submission" date="2006-05" db="EMBL/GenBank/DDBJ databases">
        <title>Generation and analysis of cDNA sequences derived from a porcine skeletal muscle library.</title>
        <authorList>
            <person name="Cai G."/>
            <person name="Chen Y."/>
            <person name="Wang C."/>
            <person name="Li J."/>
            <person name="Peng G."/>
            <person name="Zhang H."/>
        </authorList>
    </citation>
    <scope>NUCLEOTIDE SEQUENCE [LARGE SCALE MRNA]</scope>
    <source>
        <tissue>Longissimus dorsi muscle</tissue>
    </source>
</reference>
<reference key="3">
    <citation type="journal article" date="1993" name="Biochem. Biophys. Res. Commun.">
        <title>Characterization of porcine intestinal cytochrome c oxidase subunit VIIc, purified by affinity chromatography.</title>
        <authorList>
            <person name="Sillard R."/>
            <person name="Joernvall H."/>
            <person name="Mutt V."/>
        </authorList>
    </citation>
    <scope>PROTEIN SEQUENCE OF 17-63</scope>
    <source>
        <tissue>Intestine</tissue>
    </source>
</reference>
<evidence type="ECO:0000250" key="1">
    <source>
        <dbReference type="UniProtKB" id="P00430"/>
    </source>
</evidence>
<evidence type="ECO:0000250" key="2">
    <source>
        <dbReference type="UniProtKB" id="P04039"/>
    </source>
</evidence>
<evidence type="ECO:0000250" key="3">
    <source>
        <dbReference type="UniProtKB" id="P15954"/>
    </source>
</evidence>
<evidence type="ECO:0000250" key="4">
    <source>
        <dbReference type="UniProtKB" id="P17665"/>
    </source>
</evidence>
<evidence type="ECO:0000269" key="5">
    <source>
    </source>
</evidence>
<evidence type="ECO:0000305" key="6"/>
<organism>
    <name type="scientific">Sus scrofa</name>
    <name type="common">Pig</name>
    <dbReference type="NCBI Taxonomy" id="9823"/>
    <lineage>
        <taxon>Eukaryota</taxon>
        <taxon>Metazoa</taxon>
        <taxon>Chordata</taxon>
        <taxon>Craniata</taxon>
        <taxon>Vertebrata</taxon>
        <taxon>Euteleostomi</taxon>
        <taxon>Mammalia</taxon>
        <taxon>Eutheria</taxon>
        <taxon>Laurasiatheria</taxon>
        <taxon>Artiodactyla</taxon>
        <taxon>Suina</taxon>
        <taxon>Suidae</taxon>
        <taxon>Sus</taxon>
    </lineage>
</organism>
<comment type="function">
    <text evidence="2">Component of the cytochrome c oxidase, the last enzyme in the mitochondrial electron transport chain which drives oxidative phosphorylation. The respiratory chain contains 3 multisubunit complexes succinate dehydrogenase (complex II, CII), ubiquinol-cytochrome c oxidoreductase (cytochrome b-c1 complex, complex III, CIII) and cytochrome c oxidase (complex IV, CIV), that cooperate to transfer electrons derived from NADH and succinate to molecular oxygen, creating an electrochemical gradient over the inner membrane that drives transmembrane transport and the ATP synthase. Cytochrome c oxidase is the component of the respiratory chain that catalyzes the reduction of oxygen to water. Electrons originating from reduced cytochrome c in the intermembrane space (IMS) are transferred via the dinuclear copper A center (CU(A)) of subunit 2 and heme A of subunit 1 to the active site in subunit 1, a binuclear center (BNC) formed by heme A3 and copper B (CU(B)). The BNC reduces molecular oxygen to 2 water molecules using 4 electrons from cytochrome c in the IMS and 4 protons from the mitochondrial matrix.</text>
</comment>
<comment type="pathway">
    <text evidence="2">Energy metabolism; oxidative phosphorylation.</text>
</comment>
<comment type="subunit">
    <text evidence="1 3">Component of the cytochrome c oxidase (complex IV, CIV), a multisubunit enzyme composed of 14 subunits. The complex is composed of a catalytic core of 3 subunits MT-CO1, MT-CO2 and MT-CO3, encoded in the mitochondrial DNA, and 11 supernumerary subunits COX4I, COX5A, COX5B, COX6A, COX6B, COX6C, COX7A, COX7B, COX7C, COX8 and NDUFA4, which are encoded in the nuclear genome. The complex exists as a monomer or a dimer and forms supercomplexes (SCs) in the inner mitochondrial membrane with NADH-ubiquinone oxidoreductase (complex I, CI) and ubiquinol-cytochrome c oxidoreductase (cytochrome b-c1 complex, complex III, CIII), resulting in different assemblies (supercomplex SCI(1)III(2)IV(1) and megacomplex MCI(2)III(2)IV(2)) (By similarity). Interacts with RAB5IF (By similarity).</text>
</comment>
<comment type="subcellular location">
    <subcellularLocation>
        <location evidence="1">Mitochondrion inner membrane</location>
        <topology evidence="1">Single-pass membrane protein</topology>
    </subcellularLocation>
</comment>
<comment type="similarity">
    <text evidence="6">Belongs to the cytochrome c oxidase VIIc family.</text>
</comment>